<sequence length="114" mass="13106">MLEVIKAIEAEQVRSDLPEFNVGDTVKVHQKIKEGTRERVQVFEGTVLKRQNGGARETFTVRRVAYNVAVEKTFPVNSPLIEKIQVVRKGKVRRAKLYYLRDRVGKAAKVKERI</sequence>
<proteinExistence type="inferred from homology"/>
<keyword id="KW-0687">Ribonucleoprotein</keyword>
<keyword id="KW-0689">Ribosomal protein</keyword>
<feature type="chain" id="PRO_1000205883" description="Large ribosomal subunit protein bL19">
    <location>
        <begin position="1"/>
        <end position="114"/>
    </location>
</feature>
<protein>
    <recommendedName>
        <fullName evidence="1">Large ribosomal subunit protein bL19</fullName>
    </recommendedName>
    <alternativeName>
        <fullName evidence="2">50S ribosomal protein L19</fullName>
    </alternativeName>
</protein>
<comment type="function">
    <text evidence="1">This protein is located at the 30S-50S ribosomal subunit interface and may play a role in the structure and function of the aminoacyl-tRNA binding site.</text>
</comment>
<comment type="similarity">
    <text evidence="1">Belongs to the bacterial ribosomal protein bL19 family.</text>
</comment>
<reference key="1">
    <citation type="submission" date="2008-05" db="EMBL/GenBank/DDBJ databases">
        <title>Genome sequence of Clostridium botulinum Ba4 strain 657.</title>
        <authorList>
            <person name="Shrivastava S."/>
            <person name="Brown J.L."/>
            <person name="Bruce D."/>
            <person name="Detter C."/>
            <person name="Munk C."/>
            <person name="Smith L.A."/>
            <person name="Smith T.J."/>
            <person name="Sutton G."/>
            <person name="Brettin T.S."/>
        </authorList>
    </citation>
    <scope>NUCLEOTIDE SEQUENCE [LARGE SCALE GENOMIC DNA]</scope>
    <source>
        <strain>657 / Type Ba4</strain>
    </source>
</reference>
<gene>
    <name evidence="1" type="primary">rplS</name>
    <name type="ordered locus">CLJ_B2669</name>
</gene>
<accession>C3L0E2</accession>
<dbReference type="EMBL" id="CP001083">
    <property type="protein sequence ID" value="ACQ54078.1"/>
    <property type="molecule type" value="Genomic_DNA"/>
</dbReference>
<dbReference type="RefSeq" id="WP_003362586.1">
    <property type="nucleotide sequence ID" value="NC_012658.1"/>
</dbReference>
<dbReference type="SMR" id="C3L0E2"/>
<dbReference type="GeneID" id="5186699"/>
<dbReference type="KEGG" id="cbi:CLJ_B2669"/>
<dbReference type="HOGENOM" id="CLU_103507_2_2_9"/>
<dbReference type="Proteomes" id="UP000002333">
    <property type="component" value="Chromosome"/>
</dbReference>
<dbReference type="GO" id="GO:0022625">
    <property type="term" value="C:cytosolic large ribosomal subunit"/>
    <property type="evidence" value="ECO:0007669"/>
    <property type="project" value="TreeGrafter"/>
</dbReference>
<dbReference type="GO" id="GO:0003735">
    <property type="term" value="F:structural constituent of ribosome"/>
    <property type="evidence" value="ECO:0007669"/>
    <property type="project" value="InterPro"/>
</dbReference>
<dbReference type="GO" id="GO:0006412">
    <property type="term" value="P:translation"/>
    <property type="evidence" value="ECO:0007669"/>
    <property type="project" value="UniProtKB-UniRule"/>
</dbReference>
<dbReference type="FunFam" id="2.30.30.790:FF:000009">
    <property type="entry name" value="50S ribosomal protein L19"/>
    <property type="match status" value="1"/>
</dbReference>
<dbReference type="Gene3D" id="2.30.30.790">
    <property type="match status" value="1"/>
</dbReference>
<dbReference type="HAMAP" id="MF_00402">
    <property type="entry name" value="Ribosomal_bL19"/>
    <property type="match status" value="1"/>
</dbReference>
<dbReference type="InterPro" id="IPR001857">
    <property type="entry name" value="Ribosomal_bL19"/>
</dbReference>
<dbReference type="InterPro" id="IPR018257">
    <property type="entry name" value="Ribosomal_bL19_CS"/>
</dbReference>
<dbReference type="InterPro" id="IPR038657">
    <property type="entry name" value="Ribosomal_bL19_sf"/>
</dbReference>
<dbReference type="InterPro" id="IPR008991">
    <property type="entry name" value="Translation_prot_SH3-like_sf"/>
</dbReference>
<dbReference type="NCBIfam" id="TIGR01024">
    <property type="entry name" value="rplS_bact"/>
    <property type="match status" value="1"/>
</dbReference>
<dbReference type="PANTHER" id="PTHR15680:SF9">
    <property type="entry name" value="LARGE RIBOSOMAL SUBUNIT PROTEIN BL19M"/>
    <property type="match status" value="1"/>
</dbReference>
<dbReference type="PANTHER" id="PTHR15680">
    <property type="entry name" value="RIBOSOMAL PROTEIN L19"/>
    <property type="match status" value="1"/>
</dbReference>
<dbReference type="Pfam" id="PF01245">
    <property type="entry name" value="Ribosomal_L19"/>
    <property type="match status" value="1"/>
</dbReference>
<dbReference type="PIRSF" id="PIRSF002191">
    <property type="entry name" value="Ribosomal_L19"/>
    <property type="match status" value="1"/>
</dbReference>
<dbReference type="PRINTS" id="PR00061">
    <property type="entry name" value="RIBOSOMALL19"/>
</dbReference>
<dbReference type="SUPFAM" id="SSF50104">
    <property type="entry name" value="Translation proteins SH3-like domain"/>
    <property type="match status" value="1"/>
</dbReference>
<dbReference type="PROSITE" id="PS01015">
    <property type="entry name" value="RIBOSOMAL_L19"/>
    <property type="match status" value="1"/>
</dbReference>
<evidence type="ECO:0000255" key="1">
    <source>
        <dbReference type="HAMAP-Rule" id="MF_00402"/>
    </source>
</evidence>
<evidence type="ECO:0000305" key="2"/>
<organism>
    <name type="scientific">Clostridium botulinum (strain 657 / Type Ba4)</name>
    <dbReference type="NCBI Taxonomy" id="515621"/>
    <lineage>
        <taxon>Bacteria</taxon>
        <taxon>Bacillati</taxon>
        <taxon>Bacillota</taxon>
        <taxon>Clostridia</taxon>
        <taxon>Eubacteriales</taxon>
        <taxon>Clostridiaceae</taxon>
        <taxon>Clostridium</taxon>
    </lineage>
</organism>
<name>RL19_CLOB6</name>